<proteinExistence type="inferred from homology"/>
<feature type="chain" id="PRO_1000114871" description="Phenylalanine--tRNA ligase alpha subunit">
    <location>
        <begin position="1"/>
        <end position="327"/>
    </location>
</feature>
<feature type="binding site" evidence="1">
    <location>
        <position position="252"/>
    </location>
    <ligand>
        <name>Mg(2+)</name>
        <dbReference type="ChEBI" id="CHEBI:18420"/>
        <note>shared with beta subunit</note>
    </ligand>
</feature>
<keyword id="KW-0030">Aminoacyl-tRNA synthetase</keyword>
<keyword id="KW-0067">ATP-binding</keyword>
<keyword id="KW-0963">Cytoplasm</keyword>
<keyword id="KW-0436">Ligase</keyword>
<keyword id="KW-0460">Magnesium</keyword>
<keyword id="KW-0479">Metal-binding</keyword>
<keyword id="KW-0547">Nucleotide-binding</keyword>
<keyword id="KW-0648">Protein biosynthesis</keyword>
<accession>B6I8Q7</accession>
<dbReference type="EC" id="6.1.1.20" evidence="1"/>
<dbReference type="EMBL" id="AP009240">
    <property type="protein sequence ID" value="BAG77407.1"/>
    <property type="molecule type" value="Genomic_DNA"/>
</dbReference>
<dbReference type="RefSeq" id="WP_000018588.1">
    <property type="nucleotide sequence ID" value="NC_011415.1"/>
</dbReference>
<dbReference type="SMR" id="B6I8Q7"/>
<dbReference type="GeneID" id="86946239"/>
<dbReference type="KEGG" id="ecy:ECSE_1883"/>
<dbReference type="HOGENOM" id="CLU_025086_0_1_6"/>
<dbReference type="Proteomes" id="UP000008199">
    <property type="component" value="Chromosome"/>
</dbReference>
<dbReference type="GO" id="GO:0005737">
    <property type="term" value="C:cytoplasm"/>
    <property type="evidence" value="ECO:0007669"/>
    <property type="project" value="UniProtKB-SubCell"/>
</dbReference>
<dbReference type="GO" id="GO:0005524">
    <property type="term" value="F:ATP binding"/>
    <property type="evidence" value="ECO:0007669"/>
    <property type="project" value="UniProtKB-UniRule"/>
</dbReference>
<dbReference type="GO" id="GO:0000287">
    <property type="term" value="F:magnesium ion binding"/>
    <property type="evidence" value="ECO:0007669"/>
    <property type="project" value="UniProtKB-UniRule"/>
</dbReference>
<dbReference type="GO" id="GO:0004826">
    <property type="term" value="F:phenylalanine-tRNA ligase activity"/>
    <property type="evidence" value="ECO:0007669"/>
    <property type="project" value="UniProtKB-UniRule"/>
</dbReference>
<dbReference type="GO" id="GO:0000049">
    <property type="term" value="F:tRNA binding"/>
    <property type="evidence" value="ECO:0007669"/>
    <property type="project" value="InterPro"/>
</dbReference>
<dbReference type="GO" id="GO:0006432">
    <property type="term" value="P:phenylalanyl-tRNA aminoacylation"/>
    <property type="evidence" value="ECO:0007669"/>
    <property type="project" value="UniProtKB-UniRule"/>
</dbReference>
<dbReference type="CDD" id="cd00496">
    <property type="entry name" value="PheRS_alpha_core"/>
    <property type="match status" value="1"/>
</dbReference>
<dbReference type="FunFam" id="3.30.930.10:FF:000003">
    <property type="entry name" value="Phenylalanine--tRNA ligase alpha subunit"/>
    <property type="match status" value="1"/>
</dbReference>
<dbReference type="Gene3D" id="3.30.930.10">
    <property type="entry name" value="Bira Bifunctional Protein, Domain 2"/>
    <property type="match status" value="1"/>
</dbReference>
<dbReference type="HAMAP" id="MF_00281">
    <property type="entry name" value="Phe_tRNA_synth_alpha1"/>
    <property type="match status" value="1"/>
</dbReference>
<dbReference type="InterPro" id="IPR006195">
    <property type="entry name" value="aa-tRNA-synth_II"/>
</dbReference>
<dbReference type="InterPro" id="IPR045864">
    <property type="entry name" value="aa-tRNA-synth_II/BPL/LPL"/>
</dbReference>
<dbReference type="InterPro" id="IPR004529">
    <property type="entry name" value="Phe-tRNA-synth_IIc_asu"/>
</dbReference>
<dbReference type="InterPro" id="IPR004188">
    <property type="entry name" value="Phe-tRNA_ligase_II_N"/>
</dbReference>
<dbReference type="InterPro" id="IPR022911">
    <property type="entry name" value="Phe_tRNA_ligase_alpha1_bac"/>
</dbReference>
<dbReference type="InterPro" id="IPR002319">
    <property type="entry name" value="Phenylalanyl-tRNA_Synthase"/>
</dbReference>
<dbReference type="InterPro" id="IPR010978">
    <property type="entry name" value="tRNA-bd_arm"/>
</dbReference>
<dbReference type="NCBIfam" id="TIGR00468">
    <property type="entry name" value="pheS"/>
    <property type="match status" value="1"/>
</dbReference>
<dbReference type="PANTHER" id="PTHR11538:SF41">
    <property type="entry name" value="PHENYLALANINE--TRNA LIGASE, MITOCHONDRIAL"/>
    <property type="match status" value="1"/>
</dbReference>
<dbReference type="PANTHER" id="PTHR11538">
    <property type="entry name" value="PHENYLALANYL-TRNA SYNTHETASE"/>
    <property type="match status" value="1"/>
</dbReference>
<dbReference type="Pfam" id="PF02912">
    <property type="entry name" value="Phe_tRNA-synt_N"/>
    <property type="match status" value="1"/>
</dbReference>
<dbReference type="Pfam" id="PF01409">
    <property type="entry name" value="tRNA-synt_2d"/>
    <property type="match status" value="1"/>
</dbReference>
<dbReference type="SUPFAM" id="SSF55681">
    <property type="entry name" value="Class II aaRS and biotin synthetases"/>
    <property type="match status" value="1"/>
</dbReference>
<dbReference type="SUPFAM" id="SSF46589">
    <property type="entry name" value="tRNA-binding arm"/>
    <property type="match status" value="1"/>
</dbReference>
<dbReference type="PROSITE" id="PS50862">
    <property type="entry name" value="AA_TRNA_LIGASE_II"/>
    <property type="match status" value="1"/>
</dbReference>
<sequence>MSHLAELVASAKAAISQASDVAALDNVRVEYLGKKGHLTLQMTTLRELPPEERPAAGAVINEAKEQVQQALNARKAELESAALNARLAAETIDVSLPGRRIENGGLHPVTRTIDRIESFFGELGFTVATGPEIEDDYHNFDALNIPGHHPARADHDTFWFDATRLLRTQTSGVQIRTMKAQQPPIRIIAPGRVYRNDYDQTHTPMFHQMEGLIVDTNISFTNLKGTLHDFLRNFFEEDLQIRFRPSYFPFTEPSAEVDVMGKNGKWLEVLGCGMVHPNVLRNVGIDPEVYSGFAFGMGMERLTMLRYGVTDLRSFFENDLRFLKQFK</sequence>
<comment type="catalytic activity">
    <reaction evidence="1">
        <text>tRNA(Phe) + L-phenylalanine + ATP = L-phenylalanyl-tRNA(Phe) + AMP + diphosphate + H(+)</text>
        <dbReference type="Rhea" id="RHEA:19413"/>
        <dbReference type="Rhea" id="RHEA-COMP:9668"/>
        <dbReference type="Rhea" id="RHEA-COMP:9699"/>
        <dbReference type="ChEBI" id="CHEBI:15378"/>
        <dbReference type="ChEBI" id="CHEBI:30616"/>
        <dbReference type="ChEBI" id="CHEBI:33019"/>
        <dbReference type="ChEBI" id="CHEBI:58095"/>
        <dbReference type="ChEBI" id="CHEBI:78442"/>
        <dbReference type="ChEBI" id="CHEBI:78531"/>
        <dbReference type="ChEBI" id="CHEBI:456215"/>
        <dbReference type="EC" id="6.1.1.20"/>
    </reaction>
</comment>
<comment type="cofactor">
    <cofactor evidence="1">
        <name>Mg(2+)</name>
        <dbReference type="ChEBI" id="CHEBI:18420"/>
    </cofactor>
    <text evidence="1">Binds 2 magnesium ions per tetramer.</text>
</comment>
<comment type="subunit">
    <text evidence="1">Tetramer of two alpha and two beta subunits.</text>
</comment>
<comment type="subcellular location">
    <subcellularLocation>
        <location evidence="1">Cytoplasm</location>
    </subcellularLocation>
</comment>
<comment type="similarity">
    <text evidence="1">Belongs to the class-II aminoacyl-tRNA synthetase family. Phe-tRNA synthetase alpha subunit type 1 subfamily.</text>
</comment>
<protein>
    <recommendedName>
        <fullName evidence="1">Phenylalanine--tRNA ligase alpha subunit</fullName>
        <ecNumber evidence="1">6.1.1.20</ecNumber>
    </recommendedName>
    <alternativeName>
        <fullName evidence="1">Phenylalanyl-tRNA synthetase alpha subunit</fullName>
        <shortName evidence="1">PheRS</shortName>
    </alternativeName>
</protein>
<evidence type="ECO:0000255" key="1">
    <source>
        <dbReference type="HAMAP-Rule" id="MF_00281"/>
    </source>
</evidence>
<gene>
    <name evidence="1" type="primary">pheS</name>
    <name type="ordered locus">ECSE_1883</name>
</gene>
<organism>
    <name type="scientific">Escherichia coli (strain SE11)</name>
    <dbReference type="NCBI Taxonomy" id="409438"/>
    <lineage>
        <taxon>Bacteria</taxon>
        <taxon>Pseudomonadati</taxon>
        <taxon>Pseudomonadota</taxon>
        <taxon>Gammaproteobacteria</taxon>
        <taxon>Enterobacterales</taxon>
        <taxon>Enterobacteriaceae</taxon>
        <taxon>Escherichia</taxon>
    </lineage>
</organism>
<reference key="1">
    <citation type="journal article" date="2008" name="DNA Res.">
        <title>Complete genome sequence and comparative analysis of the wild-type commensal Escherichia coli strain SE11 isolated from a healthy adult.</title>
        <authorList>
            <person name="Oshima K."/>
            <person name="Toh H."/>
            <person name="Ogura Y."/>
            <person name="Sasamoto H."/>
            <person name="Morita H."/>
            <person name="Park S.-H."/>
            <person name="Ooka T."/>
            <person name="Iyoda S."/>
            <person name="Taylor T.D."/>
            <person name="Hayashi T."/>
            <person name="Itoh K."/>
            <person name="Hattori M."/>
        </authorList>
    </citation>
    <scope>NUCLEOTIDE SEQUENCE [LARGE SCALE GENOMIC DNA]</scope>
    <source>
        <strain>SE11</strain>
    </source>
</reference>
<name>SYFA_ECOSE</name>